<proteinExistence type="inferred from homology"/>
<keyword id="KW-0004">4Fe-4S</keyword>
<keyword id="KW-0408">Iron</keyword>
<keyword id="KW-0411">Iron-sulfur</keyword>
<keyword id="KW-0456">Lyase</keyword>
<keyword id="KW-0479">Metal-binding</keyword>
<keyword id="KW-1185">Reference proteome</keyword>
<keyword id="KW-0949">S-adenosyl-L-methionine</keyword>
<keyword id="KW-0784">Thiamine biosynthesis</keyword>
<keyword id="KW-0862">Zinc</keyword>
<sequence>MNANPKFLSATATVDEAAIQPLPNSTKIYIQGSRPDIRVPMRKITQSDTAASFGFEKNPAIYVYDTSGPYTDPEAKIDIRSGLDTPRLPWILERQDTEELPGPTSEYGIERLNDPKLAELRFNLHRKPRRALAGKNVSQMHYARQGIITPEMEFVAIRENMNRRAYLEELKQSGPKGEKLAELMGRQHPGQSFGAAIPQEITAEFVRSEIARGRAIIPANINHPEIEPMIIGRNFLVKINANIGNSAVTSSIGEEVEKMTWAIRWGGDNVMDLSTGKHIHETREWIIRNSPVPIGTVPIYQALEKVNGKAEDLTWEIFRDTLIEQAEQGVDYFTIHAGVLLRYVPMTAKRMTGIVSRGGSIMAKWCLAHHKESFLYEHFEDICEIMKAYDVSFSLGDGLRPGSIYDANDEAQLGELKTLGELTQIAWKHDVQVMIEGPGHVPMHLIKENMDLQLEQCHEAPFYTLGPLTTDIAPGYDHITSGIGAAQIGWYGTAMLCYVTPKEHLGLPNKVDVKDGIITYKIAAHAADLAKGHIGAQIRDNALSKARFEFRWDDQFNIGLDPDKAREFHDETLPKDSAKVAHFCSMCGPHFCSMKITQEVREYAAKQGITEIQALKKGMEVKAIEFVKSGSEIYQKQ</sequence>
<protein>
    <recommendedName>
        <fullName evidence="1">Phosphomethylpyrimidine synthase</fullName>
        <ecNumber evidence="1">4.1.99.17</ecNumber>
    </recommendedName>
    <alternativeName>
        <fullName evidence="1">Hydroxymethylpyrimidine phosphate synthase</fullName>
        <shortName evidence="1">HMP-P synthase</shortName>
        <shortName evidence="1">HMP-phosphate synthase</shortName>
        <shortName evidence="1">HMPP synthase</shortName>
    </alternativeName>
    <alternativeName>
        <fullName evidence="1">Thiamine biosynthesis protein ThiC</fullName>
    </alternativeName>
</protein>
<organism>
    <name type="scientific">Herminiimonas arsenicoxydans</name>
    <dbReference type="NCBI Taxonomy" id="204773"/>
    <lineage>
        <taxon>Bacteria</taxon>
        <taxon>Pseudomonadati</taxon>
        <taxon>Pseudomonadota</taxon>
        <taxon>Betaproteobacteria</taxon>
        <taxon>Burkholderiales</taxon>
        <taxon>Oxalobacteraceae</taxon>
        <taxon>Herminiimonas</taxon>
    </lineage>
</organism>
<comment type="function">
    <text evidence="1">Catalyzes the synthesis of the hydroxymethylpyrimidine phosphate (HMP-P) moiety of thiamine from aminoimidazole ribotide (AIR) in a radical S-adenosyl-L-methionine (SAM)-dependent reaction.</text>
</comment>
<comment type="catalytic activity">
    <reaction evidence="1">
        <text>5-amino-1-(5-phospho-beta-D-ribosyl)imidazole + S-adenosyl-L-methionine = 4-amino-2-methyl-5-(phosphooxymethyl)pyrimidine + CO + 5'-deoxyadenosine + formate + L-methionine + 3 H(+)</text>
        <dbReference type="Rhea" id="RHEA:24840"/>
        <dbReference type="ChEBI" id="CHEBI:15378"/>
        <dbReference type="ChEBI" id="CHEBI:15740"/>
        <dbReference type="ChEBI" id="CHEBI:17245"/>
        <dbReference type="ChEBI" id="CHEBI:17319"/>
        <dbReference type="ChEBI" id="CHEBI:57844"/>
        <dbReference type="ChEBI" id="CHEBI:58354"/>
        <dbReference type="ChEBI" id="CHEBI:59789"/>
        <dbReference type="ChEBI" id="CHEBI:137981"/>
        <dbReference type="EC" id="4.1.99.17"/>
    </reaction>
</comment>
<comment type="cofactor">
    <cofactor evidence="1">
        <name>[4Fe-4S] cluster</name>
        <dbReference type="ChEBI" id="CHEBI:49883"/>
    </cofactor>
    <text evidence="1">Binds 1 [4Fe-4S] cluster per subunit. The cluster is coordinated with 3 cysteines and an exchangeable S-adenosyl-L-methionine.</text>
</comment>
<comment type="pathway">
    <text evidence="1">Cofactor biosynthesis; thiamine diphosphate biosynthesis.</text>
</comment>
<comment type="subunit">
    <text evidence="1">Homodimer.</text>
</comment>
<comment type="similarity">
    <text evidence="1">Belongs to the ThiC family.</text>
</comment>
<name>THIC_HERAR</name>
<gene>
    <name evidence="1" type="primary">thiC</name>
    <name type="ordered locus">HEAR0337</name>
</gene>
<accession>A4G224</accession>
<evidence type="ECO:0000255" key="1">
    <source>
        <dbReference type="HAMAP-Rule" id="MF_00089"/>
    </source>
</evidence>
<feature type="chain" id="PRO_1000004762" description="Phosphomethylpyrimidine synthase">
    <location>
        <begin position="1"/>
        <end position="637"/>
    </location>
</feature>
<feature type="binding site" evidence="1">
    <location>
        <position position="242"/>
    </location>
    <ligand>
        <name>substrate</name>
    </ligand>
</feature>
<feature type="binding site" evidence="1">
    <location>
        <position position="271"/>
    </location>
    <ligand>
        <name>substrate</name>
    </ligand>
</feature>
<feature type="binding site" evidence="1">
    <location>
        <position position="300"/>
    </location>
    <ligand>
        <name>substrate</name>
    </ligand>
</feature>
<feature type="binding site" evidence="1">
    <location>
        <position position="336"/>
    </location>
    <ligand>
        <name>substrate</name>
    </ligand>
</feature>
<feature type="binding site" evidence="1">
    <location>
        <begin position="356"/>
        <end position="358"/>
    </location>
    <ligand>
        <name>substrate</name>
    </ligand>
</feature>
<feature type="binding site" evidence="1">
    <location>
        <begin position="397"/>
        <end position="400"/>
    </location>
    <ligand>
        <name>substrate</name>
    </ligand>
</feature>
<feature type="binding site" evidence="1">
    <location>
        <position position="436"/>
    </location>
    <ligand>
        <name>substrate</name>
    </ligand>
</feature>
<feature type="binding site" evidence="1">
    <location>
        <position position="440"/>
    </location>
    <ligand>
        <name>Zn(2+)</name>
        <dbReference type="ChEBI" id="CHEBI:29105"/>
    </ligand>
</feature>
<feature type="binding site" evidence="1">
    <location>
        <position position="463"/>
    </location>
    <ligand>
        <name>substrate</name>
    </ligand>
</feature>
<feature type="binding site" evidence="1">
    <location>
        <position position="504"/>
    </location>
    <ligand>
        <name>Zn(2+)</name>
        <dbReference type="ChEBI" id="CHEBI:29105"/>
    </ligand>
</feature>
<feature type="binding site" evidence="1">
    <location>
        <position position="584"/>
    </location>
    <ligand>
        <name>[4Fe-4S] cluster</name>
        <dbReference type="ChEBI" id="CHEBI:49883"/>
        <note>4Fe-4S-S-AdoMet</note>
    </ligand>
</feature>
<feature type="binding site" evidence="1">
    <location>
        <position position="587"/>
    </location>
    <ligand>
        <name>[4Fe-4S] cluster</name>
        <dbReference type="ChEBI" id="CHEBI:49883"/>
        <note>4Fe-4S-S-AdoMet</note>
    </ligand>
</feature>
<feature type="binding site" evidence="1">
    <location>
        <position position="592"/>
    </location>
    <ligand>
        <name>[4Fe-4S] cluster</name>
        <dbReference type="ChEBI" id="CHEBI:49883"/>
        <note>4Fe-4S-S-AdoMet</note>
    </ligand>
</feature>
<dbReference type="EC" id="4.1.99.17" evidence="1"/>
<dbReference type="EMBL" id="CU207211">
    <property type="protein sequence ID" value="CAL60561.1"/>
    <property type="molecule type" value="Genomic_DNA"/>
</dbReference>
<dbReference type="SMR" id="A4G224"/>
<dbReference type="STRING" id="204773.HEAR0337"/>
<dbReference type="KEGG" id="har:HEAR0337"/>
<dbReference type="eggNOG" id="COG0422">
    <property type="taxonomic scope" value="Bacteria"/>
</dbReference>
<dbReference type="HOGENOM" id="CLU_013181_2_1_4"/>
<dbReference type="OrthoDB" id="9805897at2"/>
<dbReference type="UniPathway" id="UPA00060"/>
<dbReference type="Proteomes" id="UP000006697">
    <property type="component" value="Chromosome"/>
</dbReference>
<dbReference type="GO" id="GO:0005829">
    <property type="term" value="C:cytosol"/>
    <property type="evidence" value="ECO:0007669"/>
    <property type="project" value="TreeGrafter"/>
</dbReference>
<dbReference type="GO" id="GO:0051539">
    <property type="term" value="F:4 iron, 4 sulfur cluster binding"/>
    <property type="evidence" value="ECO:0007669"/>
    <property type="project" value="UniProtKB-KW"/>
</dbReference>
<dbReference type="GO" id="GO:0016830">
    <property type="term" value="F:carbon-carbon lyase activity"/>
    <property type="evidence" value="ECO:0007669"/>
    <property type="project" value="InterPro"/>
</dbReference>
<dbReference type="GO" id="GO:0008270">
    <property type="term" value="F:zinc ion binding"/>
    <property type="evidence" value="ECO:0007669"/>
    <property type="project" value="UniProtKB-UniRule"/>
</dbReference>
<dbReference type="GO" id="GO:0009228">
    <property type="term" value="P:thiamine biosynthetic process"/>
    <property type="evidence" value="ECO:0007669"/>
    <property type="project" value="UniProtKB-KW"/>
</dbReference>
<dbReference type="GO" id="GO:0009229">
    <property type="term" value="P:thiamine diphosphate biosynthetic process"/>
    <property type="evidence" value="ECO:0007669"/>
    <property type="project" value="UniProtKB-UniRule"/>
</dbReference>
<dbReference type="FunFam" id="3.20.20.540:FF:000001">
    <property type="entry name" value="Phosphomethylpyrimidine synthase"/>
    <property type="match status" value="1"/>
</dbReference>
<dbReference type="Gene3D" id="6.10.250.620">
    <property type="match status" value="1"/>
</dbReference>
<dbReference type="Gene3D" id="3.20.20.540">
    <property type="entry name" value="Radical SAM ThiC family, central domain"/>
    <property type="match status" value="1"/>
</dbReference>
<dbReference type="HAMAP" id="MF_00089">
    <property type="entry name" value="ThiC"/>
    <property type="match status" value="1"/>
</dbReference>
<dbReference type="InterPro" id="IPR037509">
    <property type="entry name" value="ThiC"/>
</dbReference>
<dbReference type="InterPro" id="IPR025747">
    <property type="entry name" value="ThiC-associated_dom"/>
</dbReference>
<dbReference type="InterPro" id="IPR038521">
    <property type="entry name" value="ThiC/Bza_core_dom"/>
</dbReference>
<dbReference type="InterPro" id="IPR002817">
    <property type="entry name" value="ThiC/BzaA/B"/>
</dbReference>
<dbReference type="NCBIfam" id="NF006763">
    <property type="entry name" value="PRK09284.1"/>
    <property type="match status" value="1"/>
</dbReference>
<dbReference type="NCBIfam" id="NF009895">
    <property type="entry name" value="PRK13352.1"/>
    <property type="match status" value="1"/>
</dbReference>
<dbReference type="NCBIfam" id="TIGR00190">
    <property type="entry name" value="thiC"/>
    <property type="match status" value="1"/>
</dbReference>
<dbReference type="PANTHER" id="PTHR30557:SF1">
    <property type="entry name" value="PHOSPHOMETHYLPYRIMIDINE SYNTHASE, CHLOROPLASTIC"/>
    <property type="match status" value="1"/>
</dbReference>
<dbReference type="PANTHER" id="PTHR30557">
    <property type="entry name" value="THIAMINE BIOSYNTHESIS PROTEIN THIC"/>
    <property type="match status" value="1"/>
</dbReference>
<dbReference type="Pfam" id="PF13667">
    <property type="entry name" value="ThiC-associated"/>
    <property type="match status" value="1"/>
</dbReference>
<dbReference type="Pfam" id="PF01964">
    <property type="entry name" value="ThiC_Rad_SAM"/>
    <property type="match status" value="1"/>
</dbReference>
<dbReference type="SFLD" id="SFLDF00407">
    <property type="entry name" value="phosphomethylpyrimidine_syntha"/>
    <property type="match status" value="1"/>
</dbReference>
<dbReference type="SFLD" id="SFLDG01114">
    <property type="entry name" value="phosphomethylpyrimidine_syntha"/>
    <property type="match status" value="1"/>
</dbReference>
<dbReference type="SFLD" id="SFLDS00113">
    <property type="entry name" value="Radical_SAM_Phosphomethylpyrim"/>
    <property type="match status" value="1"/>
</dbReference>
<reference key="1">
    <citation type="journal article" date="2007" name="PLoS Genet.">
        <title>A tale of two oxidation states: bacterial colonization of arsenic-rich environments.</title>
        <authorList>
            <person name="Muller D."/>
            <person name="Medigue C."/>
            <person name="Koechler S."/>
            <person name="Barbe V."/>
            <person name="Barakat M."/>
            <person name="Talla E."/>
            <person name="Bonnefoy V."/>
            <person name="Krin E."/>
            <person name="Arsene-Ploetze F."/>
            <person name="Carapito C."/>
            <person name="Chandler M."/>
            <person name="Cournoyer B."/>
            <person name="Cruveiller S."/>
            <person name="Dossat C."/>
            <person name="Duval S."/>
            <person name="Heymann M."/>
            <person name="Leize E."/>
            <person name="Lieutaud A."/>
            <person name="Lievremont D."/>
            <person name="Makita Y."/>
            <person name="Mangenot S."/>
            <person name="Nitschke W."/>
            <person name="Ortet P."/>
            <person name="Perdrial N."/>
            <person name="Schoepp B."/>
            <person name="Siguier P."/>
            <person name="Simeonova D.D."/>
            <person name="Rouy Z."/>
            <person name="Segurens B."/>
            <person name="Turlin E."/>
            <person name="Vallenet D."/>
            <person name="van Dorsselaer A."/>
            <person name="Weiss S."/>
            <person name="Weissenbach J."/>
            <person name="Lett M.-C."/>
            <person name="Danchin A."/>
            <person name="Bertin P.N."/>
        </authorList>
    </citation>
    <scope>NUCLEOTIDE SEQUENCE [LARGE SCALE GENOMIC DNA]</scope>
    <source>
        <strain>ULPAs1</strain>
    </source>
</reference>